<sequence>MVVQNSADAGDMRAGVQLEPFLHQVGGHMSVMKYDEHTVCKPLVSREQRFYESLPLAMKRFTPQYKGTVTVHLWKDSTGHLSLVANPVKESQEPFKVSTESAAVAIWQTLQQTTGSNGSDCTLAQWPHAQLARSPKESPAKALLRSEPHLNTPAFSLVEDTNGNQVERKSFNPWGLQCHQAHLTRLCSEYPENKRHRFLLLENVVSQYTHPCVLDLKMGTRQHGDDASEEKKARHMRKCAQSTSACLGVRICGMQVYQTDKKYFLCKDKYYGRKLSVEGFRQALYQFLHNGSHLRRELLEPILHQLRALLSVIRSQSSYRFYSSSLLVIYDGQEPPERAPGSPHPHEAPQAAHGSSPGGLTKVDIRMIDFAHTTYKGYWNEHTTYDGPDPGYIFGLENLIRILQDIQEGE</sequence>
<gene>
    <name type="primary">IP6K3</name>
    <name type="synonym">IHPK3</name>
</gene>
<reference key="1">
    <citation type="journal article" date="2001" name="J. Biol. Chem.">
        <title>Identification and characterization of a novel inositol hexakisphosphate kinase.</title>
        <authorList>
            <person name="Saiardi A."/>
            <person name="Nagata E."/>
            <person name="Luo H.R."/>
            <person name="Snowman A.M."/>
            <person name="Snyder S.H."/>
        </authorList>
    </citation>
    <scope>NUCLEOTIDE SEQUENCE [MRNA]</scope>
    <scope>MUTAGENESIS OF LYS-217 AND SER-325</scope>
    <scope>FUNCTION</scope>
    <scope>SUBCELLULAR LOCATION</scope>
    <source>
        <tissue>Brain</tissue>
    </source>
</reference>
<reference key="2">
    <citation type="journal article" date="2004" name="Nat. Genet.">
        <title>Complete sequencing and characterization of 21,243 full-length human cDNAs.</title>
        <authorList>
            <person name="Ota T."/>
            <person name="Suzuki Y."/>
            <person name="Nishikawa T."/>
            <person name="Otsuki T."/>
            <person name="Sugiyama T."/>
            <person name="Irie R."/>
            <person name="Wakamatsu A."/>
            <person name="Hayashi K."/>
            <person name="Sato H."/>
            <person name="Nagai K."/>
            <person name="Kimura K."/>
            <person name="Makita H."/>
            <person name="Sekine M."/>
            <person name="Obayashi M."/>
            <person name="Nishi T."/>
            <person name="Shibahara T."/>
            <person name="Tanaka T."/>
            <person name="Ishii S."/>
            <person name="Yamamoto J."/>
            <person name="Saito K."/>
            <person name="Kawai Y."/>
            <person name="Isono Y."/>
            <person name="Nakamura Y."/>
            <person name="Nagahari K."/>
            <person name="Murakami K."/>
            <person name="Yasuda T."/>
            <person name="Iwayanagi T."/>
            <person name="Wagatsuma M."/>
            <person name="Shiratori A."/>
            <person name="Sudo H."/>
            <person name="Hosoiri T."/>
            <person name="Kaku Y."/>
            <person name="Kodaira H."/>
            <person name="Kondo H."/>
            <person name="Sugawara M."/>
            <person name="Takahashi M."/>
            <person name="Kanda K."/>
            <person name="Yokoi T."/>
            <person name="Furuya T."/>
            <person name="Kikkawa E."/>
            <person name="Omura Y."/>
            <person name="Abe K."/>
            <person name="Kamihara K."/>
            <person name="Katsuta N."/>
            <person name="Sato K."/>
            <person name="Tanikawa M."/>
            <person name="Yamazaki M."/>
            <person name="Ninomiya K."/>
            <person name="Ishibashi T."/>
            <person name="Yamashita H."/>
            <person name="Murakawa K."/>
            <person name="Fujimori K."/>
            <person name="Tanai H."/>
            <person name="Kimata M."/>
            <person name="Watanabe M."/>
            <person name="Hiraoka S."/>
            <person name="Chiba Y."/>
            <person name="Ishida S."/>
            <person name="Ono Y."/>
            <person name="Takiguchi S."/>
            <person name="Watanabe S."/>
            <person name="Yosida M."/>
            <person name="Hotuta T."/>
            <person name="Kusano J."/>
            <person name="Kanehori K."/>
            <person name="Takahashi-Fujii A."/>
            <person name="Hara H."/>
            <person name="Tanase T.-O."/>
            <person name="Nomura Y."/>
            <person name="Togiya S."/>
            <person name="Komai F."/>
            <person name="Hara R."/>
            <person name="Takeuchi K."/>
            <person name="Arita M."/>
            <person name="Imose N."/>
            <person name="Musashino K."/>
            <person name="Yuuki H."/>
            <person name="Oshima A."/>
            <person name="Sasaki N."/>
            <person name="Aotsuka S."/>
            <person name="Yoshikawa Y."/>
            <person name="Matsunawa H."/>
            <person name="Ichihara T."/>
            <person name="Shiohata N."/>
            <person name="Sano S."/>
            <person name="Moriya S."/>
            <person name="Momiyama H."/>
            <person name="Satoh N."/>
            <person name="Takami S."/>
            <person name="Terashima Y."/>
            <person name="Suzuki O."/>
            <person name="Nakagawa S."/>
            <person name="Senoh A."/>
            <person name="Mizoguchi H."/>
            <person name="Goto Y."/>
            <person name="Shimizu F."/>
            <person name="Wakebe H."/>
            <person name="Hishigaki H."/>
            <person name="Watanabe T."/>
            <person name="Sugiyama A."/>
            <person name="Takemoto M."/>
            <person name="Kawakami B."/>
            <person name="Yamazaki M."/>
            <person name="Watanabe K."/>
            <person name="Kumagai A."/>
            <person name="Itakura S."/>
            <person name="Fukuzumi Y."/>
            <person name="Fujimori Y."/>
            <person name="Komiyama M."/>
            <person name="Tashiro H."/>
            <person name="Tanigami A."/>
            <person name="Fujiwara T."/>
            <person name="Ono T."/>
            <person name="Yamada K."/>
            <person name="Fujii Y."/>
            <person name="Ozaki K."/>
            <person name="Hirao M."/>
            <person name="Ohmori Y."/>
            <person name="Kawabata A."/>
            <person name="Hikiji T."/>
            <person name="Kobatake N."/>
            <person name="Inagaki H."/>
            <person name="Ikema Y."/>
            <person name="Okamoto S."/>
            <person name="Okitani R."/>
            <person name="Kawakami T."/>
            <person name="Noguchi S."/>
            <person name="Itoh T."/>
            <person name="Shigeta K."/>
            <person name="Senba T."/>
            <person name="Matsumura K."/>
            <person name="Nakajima Y."/>
            <person name="Mizuno T."/>
            <person name="Morinaga M."/>
            <person name="Sasaki M."/>
            <person name="Togashi T."/>
            <person name="Oyama M."/>
            <person name="Hata H."/>
            <person name="Watanabe M."/>
            <person name="Komatsu T."/>
            <person name="Mizushima-Sugano J."/>
            <person name="Satoh T."/>
            <person name="Shirai Y."/>
            <person name="Takahashi Y."/>
            <person name="Nakagawa K."/>
            <person name="Okumura K."/>
            <person name="Nagase T."/>
            <person name="Nomura N."/>
            <person name="Kikuchi H."/>
            <person name="Masuho Y."/>
            <person name="Yamashita R."/>
            <person name="Nakai K."/>
            <person name="Yada T."/>
            <person name="Nakamura Y."/>
            <person name="Ohara O."/>
            <person name="Isogai T."/>
            <person name="Sugano S."/>
        </authorList>
    </citation>
    <scope>NUCLEOTIDE SEQUENCE [LARGE SCALE MRNA]</scope>
    <scope>VARIANT ILE-312</scope>
    <source>
        <tissue>Tongue</tissue>
    </source>
</reference>
<evidence type="ECO:0000250" key="1"/>
<evidence type="ECO:0000256" key="2">
    <source>
        <dbReference type="SAM" id="MobiDB-lite"/>
    </source>
</evidence>
<evidence type="ECO:0000269" key="3">
    <source>
    </source>
</evidence>
<evidence type="ECO:0000269" key="4">
    <source>
    </source>
</evidence>
<evidence type="ECO:0000305" key="5"/>
<organism>
    <name type="scientific">Homo sapiens</name>
    <name type="common">Human</name>
    <dbReference type="NCBI Taxonomy" id="9606"/>
    <lineage>
        <taxon>Eukaryota</taxon>
        <taxon>Metazoa</taxon>
        <taxon>Chordata</taxon>
        <taxon>Craniata</taxon>
        <taxon>Vertebrata</taxon>
        <taxon>Euteleostomi</taxon>
        <taxon>Mammalia</taxon>
        <taxon>Eutheria</taxon>
        <taxon>Euarchontoglires</taxon>
        <taxon>Primates</taxon>
        <taxon>Haplorrhini</taxon>
        <taxon>Catarrhini</taxon>
        <taxon>Hominidae</taxon>
        <taxon>Homo</taxon>
    </lineage>
</organism>
<comment type="function">
    <text evidence="3">Converts inositol hexakisphosphate (InsP6) to diphosphoinositol pentakisphosphate (InsP7/PP-InsP5). Converts 1,3,4,5,6-pentakisphosphate (InsP5) to PP-InsP4.</text>
</comment>
<comment type="catalytic activity">
    <reaction>
        <text>1D-myo-inositol hexakisphosphate + ATP = 5-diphospho-1D-myo-inositol 1,2,3,4,6-pentakisphosphate + ADP</text>
        <dbReference type="Rhea" id="RHEA:12793"/>
        <dbReference type="ChEBI" id="CHEBI:30616"/>
        <dbReference type="ChEBI" id="CHEBI:58130"/>
        <dbReference type="ChEBI" id="CHEBI:58628"/>
        <dbReference type="ChEBI" id="CHEBI:456216"/>
        <dbReference type="EC" id="2.7.4.21"/>
    </reaction>
</comment>
<comment type="catalytic activity">
    <reaction>
        <text>1-diphospho-1D-myo-inositol 2,3,4,5,6-pentakisphosphate + ATP + H(+) = 1,5-bis(diphospho)-1D-myo-inositol 2,3,4,6-tetrakisphosphate + ADP</text>
        <dbReference type="Rhea" id="RHEA:37467"/>
        <dbReference type="ChEBI" id="CHEBI:15378"/>
        <dbReference type="ChEBI" id="CHEBI:30616"/>
        <dbReference type="ChEBI" id="CHEBI:74946"/>
        <dbReference type="ChEBI" id="CHEBI:77983"/>
        <dbReference type="ChEBI" id="CHEBI:456216"/>
        <dbReference type="EC" id="2.7.4.21"/>
    </reaction>
</comment>
<comment type="interaction">
    <interactant intactId="EBI-10990676">
        <id>Q96PC2</id>
    </interactant>
    <interactant intactId="EBI-750641">
        <id>Q5TD97</id>
        <label>FHL5</label>
    </interactant>
    <organismsDiffer>false</organismsDiffer>
    <experiments>3</experiments>
</comment>
<comment type="interaction">
    <interactant intactId="EBI-10990676">
        <id>Q96PC2</id>
    </interactant>
    <interactant intactId="EBI-10171774">
        <id>P60410</id>
        <label>KRTAP10-8</label>
    </interactant>
    <organismsDiffer>false</organismsDiffer>
    <experiments>3</experiments>
</comment>
<comment type="interaction">
    <interactant intactId="EBI-10990676">
        <id>Q96PC2</id>
    </interactant>
    <interactant intactId="EBI-739832">
        <id>Q8TBB1</id>
        <label>LNX1</label>
    </interactant>
    <organismsDiffer>false</organismsDiffer>
    <experiments>3</experiments>
</comment>
<comment type="interaction">
    <interactant intactId="EBI-10990676">
        <id>Q96PC2</id>
    </interactant>
    <interactant intactId="EBI-394607">
        <id>Q9NPJ6</id>
        <label>MED4</label>
    </interactant>
    <organismsDiffer>false</organismsDiffer>
    <experiments>3</experiments>
</comment>
<comment type="interaction">
    <interactant intactId="EBI-10990676">
        <id>Q96PC2</id>
    </interactant>
    <interactant intactId="EBI-16439278">
        <id>Q6FHY5</id>
        <label>MEOX2</label>
    </interactant>
    <organismsDiffer>false</organismsDiffer>
    <experiments>3</experiments>
</comment>
<comment type="interaction">
    <interactant intactId="EBI-10990676">
        <id>Q96PC2</id>
    </interactant>
    <interactant intactId="EBI-740897">
        <id>Q9GZT8</id>
        <label>NIF3L1</label>
    </interactant>
    <organismsDiffer>false</organismsDiffer>
    <experiments>3</experiments>
</comment>
<comment type="interaction">
    <interactant intactId="EBI-10990676">
        <id>Q96PC2</id>
    </interactant>
    <interactant intactId="EBI-17490746">
        <id>A8MTQ0</id>
        <label>NOTO</label>
    </interactant>
    <organismsDiffer>false</organismsDiffer>
    <experiments>3</experiments>
</comment>
<comment type="interaction">
    <interactant intactId="EBI-10990676">
        <id>Q96PC2</id>
    </interactant>
    <interactant intactId="EBI-395189">
        <id>P19388</id>
        <label>POLR2E</label>
    </interactant>
    <organismsDiffer>false</organismsDiffer>
    <experiments>6</experiments>
</comment>
<comment type="interaction">
    <interactant intactId="EBI-10990676">
        <id>Q96PC2</id>
    </interactant>
    <interactant intactId="EBI-355744">
        <id>Q12933</id>
        <label>TRAF2</label>
    </interactant>
    <organismsDiffer>false</organismsDiffer>
    <experiments>3</experiments>
</comment>
<comment type="interaction">
    <interactant intactId="EBI-10990676">
        <id>Q96PC2</id>
    </interactant>
    <interactant intactId="EBI-357631">
        <id>Q13114</id>
        <label>TRAF3</label>
    </interactant>
    <organismsDiffer>false</organismsDiffer>
    <experiments>5</experiments>
</comment>
<comment type="interaction">
    <interactant intactId="EBI-10990676">
        <id>Q96PC2</id>
    </interactant>
    <interactant intactId="EBI-719493">
        <id>P14373</id>
        <label>TRIM27</label>
    </interactant>
    <organismsDiffer>false</organismsDiffer>
    <experiments>3</experiments>
</comment>
<comment type="interaction">
    <interactant intactId="EBI-10990676">
        <id>Q96PC2</id>
    </interactant>
    <interactant intactId="EBI-742327">
        <id>Q15654</id>
        <label>TRIP6</label>
    </interactant>
    <organismsDiffer>false</organismsDiffer>
    <experiments>3</experiments>
</comment>
<comment type="interaction">
    <interactant intactId="EBI-10990676">
        <id>Q96PC2</id>
    </interactant>
    <interactant intactId="EBI-625509">
        <id>Q8N720</id>
        <label>ZNF655</label>
    </interactant>
    <organismsDiffer>false</organismsDiffer>
    <experiments>3</experiments>
</comment>
<comment type="interaction">
    <interactant intactId="EBI-10990676">
        <id>Q96PC2</id>
    </interactant>
    <interactant intactId="EBI-527853">
        <id>Q9UGI0</id>
        <label>ZRANB1</label>
    </interactant>
    <organismsDiffer>false</organismsDiffer>
    <experiments>3</experiments>
</comment>
<comment type="subcellular location">
    <subcellularLocation>
        <location evidence="3">Cytoplasm</location>
    </subcellularLocation>
</comment>
<comment type="tissue specificity">
    <text>Detected in brain.</text>
</comment>
<comment type="similarity">
    <text evidence="5">Belongs to the inositol phosphokinase (IPK) family.</text>
</comment>
<comment type="sequence caution" evidence="5">
    <conflict type="frameshift">
        <sequence resource="EMBL-CDS" id="BAB71225"/>
    </conflict>
</comment>
<proteinExistence type="evidence at protein level"/>
<keyword id="KW-0067">ATP-binding</keyword>
<keyword id="KW-0963">Cytoplasm</keyword>
<keyword id="KW-0418">Kinase</keyword>
<keyword id="KW-0547">Nucleotide-binding</keyword>
<keyword id="KW-1185">Reference proteome</keyword>
<keyword id="KW-0808">Transferase</keyword>
<dbReference type="EC" id="2.7.4.21"/>
<dbReference type="EMBL" id="AF393812">
    <property type="protein sequence ID" value="AAL17053.1"/>
    <property type="molecule type" value="mRNA"/>
</dbReference>
<dbReference type="EMBL" id="AK056586">
    <property type="protein sequence ID" value="BAB71225.2"/>
    <property type="status" value="ALT_FRAME"/>
    <property type="molecule type" value="mRNA"/>
</dbReference>
<dbReference type="CCDS" id="CCDS34435.1"/>
<dbReference type="RefSeq" id="NP_001136355.1">
    <property type="nucleotide sequence ID" value="NM_001142883.2"/>
</dbReference>
<dbReference type="RefSeq" id="NP_473452.2">
    <property type="nucleotide sequence ID" value="NM_054111.5"/>
</dbReference>
<dbReference type="RefSeq" id="XP_005248899.1">
    <property type="nucleotide sequence ID" value="XM_005248842.4"/>
</dbReference>
<dbReference type="RefSeq" id="XP_024302091.1">
    <property type="nucleotide sequence ID" value="XM_024446323.2"/>
</dbReference>
<dbReference type="RefSeq" id="XP_024302092.1">
    <property type="nucleotide sequence ID" value="XM_024446324.2"/>
</dbReference>
<dbReference type="RefSeq" id="XP_024302093.1">
    <property type="nucleotide sequence ID" value="XM_024446325.2"/>
</dbReference>
<dbReference type="RefSeq" id="XP_047274124.1">
    <property type="nucleotide sequence ID" value="XM_047418168.1"/>
</dbReference>
<dbReference type="RefSeq" id="XP_054210172.1">
    <property type="nucleotide sequence ID" value="XM_054354197.1"/>
</dbReference>
<dbReference type="RefSeq" id="XP_054210173.1">
    <property type="nucleotide sequence ID" value="XM_054354198.1"/>
</dbReference>
<dbReference type="RefSeq" id="XP_054210174.1">
    <property type="nucleotide sequence ID" value="XM_054354199.1"/>
</dbReference>
<dbReference type="RefSeq" id="XP_054210175.1">
    <property type="nucleotide sequence ID" value="XM_054354200.1"/>
</dbReference>
<dbReference type="BioGRID" id="125584">
    <property type="interactions" value="31"/>
</dbReference>
<dbReference type="FunCoup" id="Q96PC2">
    <property type="interactions" value="424"/>
</dbReference>
<dbReference type="IntAct" id="Q96PC2">
    <property type="interactions" value="31"/>
</dbReference>
<dbReference type="STRING" id="9606.ENSP00000293756"/>
<dbReference type="BindingDB" id="Q96PC2"/>
<dbReference type="ChEMBL" id="CHEMBL4523431"/>
<dbReference type="iPTMnet" id="Q96PC2"/>
<dbReference type="PhosphoSitePlus" id="Q96PC2"/>
<dbReference type="BioMuta" id="IP6K3"/>
<dbReference type="DMDM" id="143811404"/>
<dbReference type="MassIVE" id="Q96PC2"/>
<dbReference type="PaxDb" id="9606-ENSP00000398861"/>
<dbReference type="PeptideAtlas" id="Q96PC2"/>
<dbReference type="ProteomicsDB" id="77659"/>
<dbReference type="Antibodypedia" id="45687">
    <property type="antibodies" value="145 antibodies from 28 providers"/>
</dbReference>
<dbReference type="DNASU" id="117283"/>
<dbReference type="Ensembl" id="ENST00000293756.5">
    <property type="protein sequence ID" value="ENSP00000293756.4"/>
    <property type="gene ID" value="ENSG00000161896.12"/>
</dbReference>
<dbReference type="Ensembl" id="ENST00000451316.6">
    <property type="protein sequence ID" value="ENSP00000398861.1"/>
    <property type="gene ID" value="ENSG00000161896.12"/>
</dbReference>
<dbReference type="GeneID" id="117283"/>
<dbReference type="KEGG" id="hsa:117283"/>
<dbReference type="MANE-Select" id="ENST00000293756.5">
    <property type="protein sequence ID" value="ENSP00000293756.4"/>
    <property type="RefSeq nucleotide sequence ID" value="NM_054111.5"/>
    <property type="RefSeq protein sequence ID" value="NP_473452.2"/>
</dbReference>
<dbReference type="UCSC" id="uc003ofb.3">
    <property type="organism name" value="human"/>
</dbReference>
<dbReference type="AGR" id="HGNC:17269"/>
<dbReference type="CTD" id="117283"/>
<dbReference type="DisGeNET" id="117283"/>
<dbReference type="GeneCards" id="IP6K3"/>
<dbReference type="HGNC" id="HGNC:17269">
    <property type="gene designation" value="IP6K3"/>
</dbReference>
<dbReference type="HPA" id="ENSG00000161896">
    <property type="expression patterns" value="Group enriched (skeletal muscle, tongue)"/>
</dbReference>
<dbReference type="MIM" id="606993">
    <property type="type" value="gene"/>
</dbReference>
<dbReference type="neXtProt" id="NX_Q96PC2"/>
<dbReference type="OpenTargets" id="ENSG00000161896"/>
<dbReference type="PharmGKB" id="PA164721016"/>
<dbReference type="VEuPathDB" id="HostDB:ENSG00000161896"/>
<dbReference type="eggNOG" id="KOG1620">
    <property type="taxonomic scope" value="Eukaryota"/>
</dbReference>
<dbReference type="GeneTree" id="ENSGT00940000160887"/>
<dbReference type="HOGENOM" id="CLU_014862_0_0_1"/>
<dbReference type="InParanoid" id="Q96PC2"/>
<dbReference type="OMA" id="VYQADTG"/>
<dbReference type="OrthoDB" id="2573163at2759"/>
<dbReference type="PAN-GO" id="Q96PC2">
    <property type="GO annotations" value="5 GO annotations based on evolutionary models"/>
</dbReference>
<dbReference type="PhylomeDB" id="Q96PC2"/>
<dbReference type="TreeFam" id="TF314066"/>
<dbReference type="BioCyc" id="MetaCyc:HS08619-MONOMER"/>
<dbReference type="BRENDA" id="2.7.4.21">
    <property type="organism ID" value="2681"/>
</dbReference>
<dbReference type="PathwayCommons" id="Q96PC2"/>
<dbReference type="Reactome" id="R-HSA-1855167">
    <property type="pathway name" value="Synthesis of pyrophosphates in the cytosol"/>
</dbReference>
<dbReference type="SignaLink" id="Q96PC2"/>
<dbReference type="BioGRID-ORCS" id="117283">
    <property type="hits" value="16 hits in 1161 CRISPR screens"/>
</dbReference>
<dbReference type="GenomeRNAi" id="117283"/>
<dbReference type="Pharos" id="Q96PC2">
    <property type="development level" value="Tbio"/>
</dbReference>
<dbReference type="PRO" id="PR:Q96PC2"/>
<dbReference type="Proteomes" id="UP000005640">
    <property type="component" value="Chromosome 6"/>
</dbReference>
<dbReference type="RNAct" id="Q96PC2">
    <property type="molecule type" value="protein"/>
</dbReference>
<dbReference type="Bgee" id="ENSG00000161896">
    <property type="expression patterns" value="Expressed in gastrocnemius and 130 other cell types or tissues"/>
</dbReference>
<dbReference type="ExpressionAtlas" id="Q96PC2">
    <property type="expression patterns" value="baseline and differential"/>
</dbReference>
<dbReference type="GO" id="GO:0005737">
    <property type="term" value="C:cytoplasm"/>
    <property type="evidence" value="ECO:0000314"/>
    <property type="project" value="UniProtKB"/>
</dbReference>
<dbReference type="GO" id="GO:0005829">
    <property type="term" value="C:cytosol"/>
    <property type="evidence" value="ECO:0000304"/>
    <property type="project" value="Reactome"/>
</dbReference>
<dbReference type="GO" id="GO:0005634">
    <property type="term" value="C:nucleus"/>
    <property type="evidence" value="ECO:0000318"/>
    <property type="project" value="GO_Central"/>
</dbReference>
<dbReference type="GO" id="GO:0005524">
    <property type="term" value="F:ATP binding"/>
    <property type="evidence" value="ECO:0007669"/>
    <property type="project" value="UniProtKB-KW"/>
</dbReference>
<dbReference type="GO" id="GO:0000829">
    <property type="term" value="F:diphosphoinositol pentakisphosphate kinase activity"/>
    <property type="evidence" value="ECO:0000304"/>
    <property type="project" value="Reactome"/>
</dbReference>
<dbReference type="GO" id="GO:0052839">
    <property type="term" value="F:diphosphoinositol tetrakisphosphate kinase activity"/>
    <property type="evidence" value="ECO:0000304"/>
    <property type="project" value="Reactome"/>
</dbReference>
<dbReference type="GO" id="GO:0052836">
    <property type="term" value="F:inositol 5-diphosphate pentakisphosphate 5-kinase activity"/>
    <property type="evidence" value="ECO:0000304"/>
    <property type="project" value="Reactome"/>
</dbReference>
<dbReference type="GO" id="GO:0000832">
    <property type="term" value="F:inositol hexakisphosphate 5-kinase activity"/>
    <property type="evidence" value="ECO:0007669"/>
    <property type="project" value="RHEA"/>
</dbReference>
<dbReference type="GO" id="GO:0000831">
    <property type="term" value="F:inositol hexakisphosphate 6-kinase activity"/>
    <property type="evidence" value="ECO:0000314"/>
    <property type="project" value="MGI"/>
</dbReference>
<dbReference type="GO" id="GO:0000828">
    <property type="term" value="F:inositol hexakisphosphate kinase activity"/>
    <property type="evidence" value="ECO:0000314"/>
    <property type="project" value="UniProtKB"/>
</dbReference>
<dbReference type="GO" id="GO:0000827">
    <property type="term" value="F:inositol-1,3,4,5,6-pentakisphosphate kinase activity"/>
    <property type="evidence" value="ECO:0000304"/>
    <property type="project" value="Reactome"/>
</dbReference>
<dbReference type="GO" id="GO:0032958">
    <property type="term" value="P:inositol phosphate biosynthetic process"/>
    <property type="evidence" value="ECO:0000314"/>
    <property type="project" value="MGI"/>
</dbReference>
<dbReference type="GO" id="GO:0043647">
    <property type="term" value="P:inositol phosphate metabolic process"/>
    <property type="evidence" value="ECO:0000304"/>
    <property type="project" value="Reactome"/>
</dbReference>
<dbReference type="GO" id="GO:0040011">
    <property type="term" value="P:locomotion"/>
    <property type="evidence" value="ECO:0007669"/>
    <property type="project" value="Ensembl"/>
</dbReference>
<dbReference type="GO" id="GO:0046488">
    <property type="term" value="P:phosphatidylinositol metabolic process"/>
    <property type="evidence" value="ECO:0000314"/>
    <property type="project" value="UniProtKB"/>
</dbReference>
<dbReference type="GO" id="GO:0046854">
    <property type="term" value="P:phosphatidylinositol phosphate biosynthetic process"/>
    <property type="evidence" value="ECO:0000318"/>
    <property type="project" value="GO_Central"/>
</dbReference>
<dbReference type="GO" id="GO:0006468">
    <property type="term" value="P:protein phosphorylation"/>
    <property type="evidence" value="ECO:0000314"/>
    <property type="project" value="UniProtKB"/>
</dbReference>
<dbReference type="FunFam" id="3.30.470.160:FF:000002">
    <property type="entry name" value="Kinase"/>
    <property type="match status" value="1"/>
</dbReference>
<dbReference type="Gene3D" id="3.30.470.160">
    <property type="entry name" value="Inositol polyphosphate kinase"/>
    <property type="match status" value="1"/>
</dbReference>
<dbReference type="InterPro" id="IPR005522">
    <property type="entry name" value="IPK"/>
</dbReference>
<dbReference type="InterPro" id="IPR038286">
    <property type="entry name" value="IPK_sf"/>
</dbReference>
<dbReference type="PANTHER" id="PTHR12400:SF40">
    <property type="entry name" value="INOSITOL HEXAKISPHOSPHATE KINASE 3"/>
    <property type="match status" value="1"/>
</dbReference>
<dbReference type="PANTHER" id="PTHR12400">
    <property type="entry name" value="INOSITOL POLYPHOSPHATE KINASE"/>
    <property type="match status" value="1"/>
</dbReference>
<dbReference type="Pfam" id="PF03770">
    <property type="entry name" value="IPK"/>
    <property type="match status" value="1"/>
</dbReference>
<dbReference type="SUPFAM" id="SSF56104">
    <property type="entry name" value="SAICAR synthase-like"/>
    <property type="match status" value="1"/>
</dbReference>
<accession>Q96PC2</accession>
<accession>Q96MQ9</accession>
<feature type="chain" id="PRO_0000066881" description="Inositol hexakisphosphate kinase 3">
    <location>
        <begin position="1"/>
        <end position="410"/>
    </location>
</feature>
<feature type="region of interest" description="Disordered" evidence="2">
    <location>
        <begin position="333"/>
        <end position="358"/>
    </location>
</feature>
<feature type="binding site" evidence="1">
    <location>
        <begin position="211"/>
        <end position="219"/>
    </location>
    <ligand>
        <name>substrate</name>
    </ligand>
</feature>
<feature type="sequence variant" id="VAR_031590" description="In dbSNP:rs34431226.">
    <original>R</original>
    <variation>W</variation>
    <location>
        <position position="60"/>
    </location>
</feature>
<feature type="sequence variant" id="VAR_031591" description="In dbSNP:rs34573836.">
    <original>A</original>
    <variation>V</variation>
    <location>
        <position position="308"/>
    </location>
</feature>
<feature type="sequence variant" id="VAR_031592" description="In dbSNP:rs4713668." evidence="4">
    <original>V</original>
    <variation>I</variation>
    <location>
        <position position="312"/>
    </location>
</feature>
<feature type="sequence variant" id="VAR_031593" description="In dbSNP:rs34343647.">
    <original>Y</original>
    <variation>S</variation>
    <location>
        <position position="378"/>
    </location>
</feature>
<feature type="mutagenesis site" description="Loss of activity." evidence="3">
    <original>K</original>
    <variation>A</variation>
    <location>
        <position position="217"/>
    </location>
</feature>
<feature type="mutagenesis site" description="Strongly reduces activity." evidence="3">
    <original>S</original>
    <variation>A</variation>
    <location>
        <position position="325"/>
    </location>
</feature>
<feature type="sequence conflict" description="In Ref. 1; AAL17053." evidence="5" ref="1">
    <original>L</original>
    <variation>Q</variation>
    <location>
        <position position="56"/>
    </location>
</feature>
<feature type="sequence conflict" description="In Ref. 2; BAB71225." evidence="5" ref="2">
    <original>H</original>
    <variation>L</variation>
    <location>
        <position position="304"/>
    </location>
</feature>
<name>IP6K3_HUMAN</name>
<protein>
    <recommendedName>
        <fullName>Inositol hexakisphosphate kinase 3</fullName>
        <shortName>InsP6 kinase 3</shortName>
        <ecNumber>2.7.4.21</ecNumber>
    </recommendedName>
    <alternativeName>
        <fullName>Inositol hexaphosphate kinase 3</fullName>
    </alternativeName>
</protein>